<comment type="similarity">
    <text evidence="1">Belongs to the universal ribosomal protein uS2 family.</text>
</comment>
<accession>B1ZLB5</accession>
<proteinExistence type="inferred from homology"/>
<reference key="1">
    <citation type="submission" date="2008-04" db="EMBL/GenBank/DDBJ databases">
        <title>Complete sequence of chromosome of Methylobacterium populi BJ001.</title>
        <authorList>
            <consortium name="US DOE Joint Genome Institute"/>
            <person name="Copeland A."/>
            <person name="Lucas S."/>
            <person name="Lapidus A."/>
            <person name="Glavina del Rio T."/>
            <person name="Dalin E."/>
            <person name="Tice H."/>
            <person name="Bruce D."/>
            <person name="Goodwin L."/>
            <person name="Pitluck S."/>
            <person name="Chertkov O."/>
            <person name="Brettin T."/>
            <person name="Detter J.C."/>
            <person name="Han C."/>
            <person name="Kuske C.R."/>
            <person name="Schmutz J."/>
            <person name="Larimer F."/>
            <person name="Land M."/>
            <person name="Hauser L."/>
            <person name="Kyrpides N."/>
            <person name="Mikhailova N."/>
            <person name="Marx C."/>
            <person name="Richardson P."/>
        </authorList>
    </citation>
    <scope>NUCLEOTIDE SEQUENCE [LARGE SCALE GENOMIC DNA]</scope>
    <source>
        <strain>ATCC BAA-705 / NCIMB 13946 / BJ001</strain>
    </source>
</reference>
<dbReference type="EMBL" id="CP001029">
    <property type="protein sequence ID" value="ACB80196.1"/>
    <property type="molecule type" value="Genomic_DNA"/>
</dbReference>
<dbReference type="RefSeq" id="WP_012453940.1">
    <property type="nucleotide sequence ID" value="NC_010725.1"/>
</dbReference>
<dbReference type="SMR" id="B1ZLB5"/>
<dbReference type="STRING" id="441620.Mpop_2033"/>
<dbReference type="KEGG" id="mpo:Mpop_2033"/>
<dbReference type="eggNOG" id="COG0052">
    <property type="taxonomic scope" value="Bacteria"/>
</dbReference>
<dbReference type="HOGENOM" id="CLU_040318_2_1_5"/>
<dbReference type="OrthoDB" id="9808036at2"/>
<dbReference type="Proteomes" id="UP000007136">
    <property type="component" value="Chromosome"/>
</dbReference>
<dbReference type="GO" id="GO:0022627">
    <property type="term" value="C:cytosolic small ribosomal subunit"/>
    <property type="evidence" value="ECO:0007669"/>
    <property type="project" value="TreeGrafter"/>
</dbReference>
<dbReference type="GO" id="GO:0003735">
    <property type="term" value="F:structural constituent of ribosome"/>
    <property type="evidence" value="ECO:0007669"/>
    <property type="project" value="InterPro"/>
</dbReference>
<dbReference type="GO" id="GO:0006412">
    <property type="term" value="P:translation"/>
    <property type="evidence" value="ECO:0007669"/>
    <property type="project" value="UniProtKB-UniRule"/>
</dbReference>
<dbReference type="CDD" id="cd01425">
    <property type="entry name" value="RPS2"/>
    <property type="match status" value="1"/>
</dbReference>
<dbReference type="FunFam" id="1.10.287.610:FF:000001">
    <property type="entry name" value="30S ribosomal protein S2"/>
    <property type="match status" value="1"/>
</dbReference>
<dbReference type="Gene3D" id="1.10.150.20">
    <property type="entry name" value="5' to 3' exonuclease, C-terminal subdomain"/>
    <property type="match status" value="1"/>
</dbReference>
<dbReference type="Gene3D" id="3.40.50.10490">
    <property type="entry name" value="Glucose-6-phosphate isomerase like protein, domain 1"/>
    <property type="match status" value="1"/>
</dbReference>
<dbReference type="Gene3D" id="1.10.287.610">
    <property type="entry name" value="Helix hairpin bin"/>
    <property type="match status" value="1"/>
</dbReference>
<dbReference type="HAMAP" id="MF_00291_B">
    <property type="entry name" value="Ribosomal_uS2_B"/>
    <property type="match status" value="1"/>
</dbReference>
<dbReference type="InterPro" id="IPR001865">
    <property type="entry name" value="Ribosomal_uS2"/>
</dbReference>
<dbReference type="InterPro" id="IPR005706">
    <property type="entry name" value="Ribosomal_uS2_bac/mit/plastid"/>
</dbReference>
<dbReference type="InterPro" id="IPR018130">
    <property type="entry name" value="Ribosomal_uS2_CS"/>
</dbReference>
<dbReference type="InterPro" id="IPR023591">
    <property type="entry name" value="Ribosomal_uS2_flav_dom_sf"/>
</dbReference>
<dbReference type="NCBIfam" id="NF008966">
    <property type="entry name" value="PRK12311.1"/>
    <property type="match status" value="1"/>
</dbReference>
<dbReference type="NCBIfam" id="TIGR01011">
    <property type="entry name" value="rpsB_bact"/>
    <property type="match status" value="1"/>
</dbReference>
<dbReference type="PANTHER" id="PTHR12534">
    <property type="entry name" value="30S RIBOSOMAL PROTEIN S2 PROKARYOTIC AND ORGANELLAR"/>
    <property type="match status" value="1"/>
</dbReference>
<dbReference type="PANTHER" id="PTHR12534:SF0">
    <property type="entry name" value="SMALL RIBOSOMAL SUBUNIT PROTEIN US2M"/>
    <property type="match status" value="1"/>
</dbReference>
<dbReference type="Pfam" id="PF00318">
    <property type="entry name" value="Ribosomal_S2"/>
    <property type="match status" value="1"/>
</dbReference>
<dbReference type="PRINTS" id="PR00395">
    <property type="entry name" value="RIBOSOMALS2"/>
</dbReference>
<dbReference type="SUPFAM" id="SSF52313">
    <property type="entry name" value="Ribosomal protein S2"/>
    <property type="match status" value="1"/>
</dbReference>
<dbReference type="PROSITE" id="PS00962">
    <property type="entry name" value="RIBOSOMAL_S2_1"/>
    <property type="match status" value="1"/>
</dbReference>
<dbReference type="PROSITE" id="PS00963">
    <property type="entry name" value="RIBOSOMAL_S2_2"/>
    <property type="match status" value="1"/>
</dbReference>
<organism>
    <name type="scientific">Methylorubrum populi (strain ATCC BAA-705 / NCIMB 13946 / BJ001)</name>
    <name type="common">Methylobacterium populi</name>
    <dbReference type="NCBI Taxonomy" id="441620"/>
    <lineage>
        <taxon>Bacteria</taxon>
        <taxon>Pseudomonadati</taxon>
        <taxon>Pseudomonadota</taxon>
        <taxon>Alphaproteobacteria</taxon>
        <taxon>Hyphomicrobiales</taxon>
        <taxon>Methylobacteriaceae</taxon>
        <taxon>Methylorubrum</taxon>
    </lineage>
</organism>
<keyword id="KW-0687">Ribonucleoprotein</keyword>
<keyword id="KW-0689">Ribosomal protein</keyword>
<feature type="chain" id="PRO_0000352006" description="Small ribosomal subunit protein uS2">
    <location>
        <begin position="1"/>
        <end position="354"/>
    </location>
</feature>
<evidence type="ECO:0000255" key="1">
    <source>
        <dbReference type="HAMAP-Rule" id="MF_00291"/>
    </source>
</evidence>
<evidence type="ECO:0000305" key="2"/>
<gene>
    <name evidence="1" type="primary">rpsB</name>
    <name type="ordered locus">Mpop_2033</name>
</gene>
<protein>
    <recommendedName>
        <fullName evidence="1">Small ribosomal subunit protein uS2</fullName>
    </recommendedName>
    <alternativeName>
        <fullName evidence="2">30S ribosomal protein S2</fullName>
    </alternativeName>
</protein>
<name>RS2_METPB</name>
<sequence length="354" mass="37903">MAVDFSMRQLLEAGAHFGHQSHRWNPKMQPYIFGTRNNIHIIDLAQTVPALHAALQAVSDTVARGGRVLFVGTKRQAADAIAEAAKRSAQYYVNSRWLGGMLTNWKTISGSIQRLRKVDETLEGGAVGLTKKERLMLTREKEKLEKALGGIKDMGGVPDLLFVIDTNKEQLAIKEAQRLGIPVAAIVDTNCNPDGISYIVPANDDAGRAIALYCDLIARAAIEGIGRGQGALGIDVGASEEPTAEELPANDDVVASVASDAIAPADVAALAESTEHFEQLAAPRGAPDDLTKLTGVGPQLVQKLNDAGVWHYWQIAAMQADDVAKLDADLKLNGRIARDGWVEQSRAFVEAAAA</sequence>